<comment type="function">
    <text evidence="1">Catalyzes the condensation of the acetyl group of acetyl-CoA with 3-methyl-2-oxobutanoate (2-ketoisovalerate) to form 3-carboxy-3-hydroxy-4-methylpentanoate (2-isopropylmalate).</text>
</comment>
<comment type="catalytic activity">
    <reaction evidence="1">
        <text>3-methyl-2-oxobutanoate + acetyl-CoA + H2O = (2S)-2-isopropylmalate + CoA + H(+)</text>
        <dbReference type="Rhea" id="RHEA:21524"/>
        <dbReference type="ChEBI" id="CHEBI:1178"/>
        <dbReference type="ChEBI" id="CHEBI:11851"/>
        <dbReference type="ChEBI" id="CHEBI:15377"/>
        <dbReference type="ChEBI" id="CHEBI:15378"/>
        <dbReference type="ChEBI" id="CHEBI:57287"/>
        <dbReference type="ChEBI" id="CHEBI:57288"/>
        <dbReference type="EC" id="2.3.3.13"/>
    </reaction>
</comment>
<comment type="cofactor">
    <cofactor evidence="1">
        <name>Mn(2+)</name>
        <dbReference type="ChEBI" id="CHEBI:29035"/>
    </cofactor>
</comment>
<comment type="pathway">
    <text evidence="1">Amino-acid biosynthesis; L-leucine biosynthesis; L-leucine from 3-methyl-2-oxobutanoate: step 1/4.</text>
</comment>
<comment type="subunit">
    <text evidence="1">Homodimer.</text>
</comment>
<comment type="subcellular location">
    <subcellularLocation>
        <location evidence="1">Cytoplasm</location>
    </subcellularLocation>
</comment>
<comment type="similarity">
    <text evidence="1">Belongs to the alpha-IPM synthase/homocitrate synthase family. LeuA type 1 subfamily.</text>
</comment>
<gene>
    <name evidence="1" type="primary">leuA</name>
    <name type="ordered locus">Helmi_14620</name>
    <name type="ORF">HM1_1515</name>
</gene>
<organism>
    <name type="scientific">Heliobacterium modesticaldum (strain ATCC 51547 / Ice1)</name>
    <dbReference type="NCBI Taxonomy" id="498761"/>
    <lineage>
        <taxon>Bacteria</taxon>
        <taxon>Bacillati</taxon>
        <taxon>Bacillota</taxon>
        <taxon>Clostridia</taxon>
        <taxon>Eubacteriales</taxon>
        <taxon>Heliobacteriaceae</taxon>
        <taxon>Heliomicrobium</taxon>
    </lineage>
</organism>
<sequence>MSKRVVIFDTTLRDGEQSPGVSLNLHEKLEIAQQLARLGVDVIEAGFPIASPGDFEAVKAVAEQVRGPVICALARANRKDIERAAEALRGAEEARIHTFIATSPIHMQHKLRMEPDKVLDTAVDAVKLAKSFTSNVEFSAEDAFRSDVGFLCRIFSAAIEAGATTINIPDTVGYATPQEFGAFIKAIINGTPNIDKAIVSVHCHNDLGLAVANTLAALENGALQVEGTINGIGERAGNASLEEVIMALYTRKPFYNLETSINKSEIYRTSRLVSNLTGMLVQPNKAIVGKNAFAHESGIHQDGVLKERTTYEIMNPEMIGIFTNNIVLGKHSGRHAFRERLKELGYSLDDEKLTKAFARFKALADRKREITDEDLVVLVEDELRAFPEAYSLEYLHITSGTVLVPTATVRLRREEENFEEASCGDGPVDAAYKAIEKITGTGARLASYAISATTAGEDSQGEVSVKLEREGRFYTGRGVDTDIIVASAKAYLNAVNKIVFDGLPKAKTERAV</sequence>
<keyword id="KW-0028">Amino-acid biosynthesis</keyword>
<keyword id="KW-0100">Branched-chain amino acid biosynthesis</keyword>
<keyword id="KW-0963">Cytoplasm</keyword>
<keyword id="KW-0432">Leucine biosynthesis</keyword>
<keyword id="KW-0464">Manganese</keyword>
<keyword id="KW-0479">Metal-binding</keyword>
<keyword id="KW-1185">Reference proteome</keyword>
<keyword id="KW-0808">Transferase</keyword>
<name>LEU1_HELMI</name>
<dbReference type="EC" id="2.3.3.13" evidence="1"/>
<dbReference type="EMBL" id="CP000930">
    <property type="protein sequence ID" value="ABZ84087.1"/>
    <property type="molecule type" value="Genomic_DNA"/>
</dbReference>
<dbReference type="RefSeq" id="WP_012282601.1">
    <property type="nucleotide sequence ID" value="NC_010337.2"/>
</dbReference>
<dbReference type="SMR" id="B0TCR1"/>
<dbReference type="STRING" id="498761.HM1_1515"/>
<dbReference type="KEGG" id="hmo:HM1_1515"/>
<dbReference type="eggNOG" id="COG0119">
    <property type="taxonomic scope" value="Bacteria"/>
</dbReference>
<dbReference type="HOGENOM" id="CLU_022158_0_1_9"/>
<dbReference type="OrthoDB" id="9804858at2"/>
<dbReference type="UniPathway" id="UPA00048">
    <property type="reaction ID" value="UER00070"/>
</dbReference>
<dbReference type="Proteomes" id="UP000008550">
    <property type="component" value="Chromosome"/>
</dbReference>
<dbReference type="GO" id="GO:0005737">
    <property type="term" value="C:cytoplasm"/>
    <property type="evidence" value="ECO:0007669"/>
    <property type="project" value="UniProtKB-SubCell"/>
</dbReference>
<dbReference type="GO" id="GO:0003852">
    <property type="term" value="F:2-isopropylmalate synthase activity"/>
    <property type="evidence" value="ECO:0007669"/>
    <property type="project" value="UniProtKB-UniRule"/>
</dbReference>
<dbReference type="GO" id="GO:0003985">
    <property type="term" value="F:acetyl-CoA C-acetyltransferase activity"/>
    <property type="evidence" value="ECO:0007669"/>
    <property type="project" value="UniProtKB-UniRule"/>
</dbReference>
<dbReference type="GO" id="GO:0030145">
    <property type="term" value="F:manganese ion binding"/>
    <property type="evidence" value="ECO:0007669"/>
    <property type="project" value="UniProtKB-UniRule"/>
</dbReference>
<dbReference type="GO" id="GO:0009098">
    <property type="term" value="P:L-leucine biosynthetic process"/>
    <property type="evidence" value="ECO:0007669"/>
    <property type="project" value="UniProtKB-UniRule"/>
</dbReference>
<dbReference type="CDD" id="cd07940">
    <property type="entry name" value="DRE_TIM_IPMS"/>
    <property type="match status" value="1"/>
</dbReference>
<dbReference type="FunFam" id="1.10.238.260:FF:000001">
    <property type="entry name" value="2-isopropylmalate synthase"/>
    <property type="match status" value="1"/>
</dbReference>
<dbReference type="FunFam" id="3.20.20.70:FF:000010">
    <property type="entry name" value="2-isopropylmalate synthase"/>
    <property type="match status" value="1"/>
</dbReference>
<dbReference type="FunFam" id="3.30.160.270:FF:000001">
    <property type="entry name" value="2-isopropylmalate synthase"/>
    <property type="match status" value="1"/>
</dbReference>
<dbReference type="Gene3D" id="1.10.238.260">
    <property type="match status" value="1"/>
</dbReference>
<dbReference type="Gene3D" id="3.30.160.270">
    <property type="match status" value="1"/>
</dbReference>
<dbReference type="Gene3D" id="3.20.20.70">
    <property type="entry name" value="Aldolase class I"/>
    <property type="match status" value="1"/>
</dbReference>
<dbReference type="HAMAP" id="MF_01025">
    <property type="entry name" value="LeuA_type1"/>
    <property type="match status" value="1"/>
</dbReference>
<dbReference type="InterPro" id="IPR050073">
    <property type="entry name" value="2-IPM_HCS-like"/>
</dbReference>
<dbReference type="InterPro" id="IPR013709">
    <property type="entry name" value="2-isopropylmalate_synth_dimer"/>
</dbReference>
<dbReference type="InterPro" id="IPR002034">
    <property type="entry name" value="AIPM/Hcit_synth_CS"/>
</dbReference>
<dbReference type="InterPro" id="IPR013785">
    <property type="entry name" value="Aldolase_TIM"/>
</dbReference>
<dbReference type="InterPro" id="IPR054691">
    <property type="entry name" value="LeuA/HCS_post-cat"/>
</dbReference>
<dbReference type="InterPro" id="IPR036230">
    <property type="entry name" value="LeuA_allosteric_dom_sf"/>
</dbReference>
<dbReference type="InterPro" id="IPR005671">
    <property type="entry name" value="LeuA_bact_synth"/>
</dbReference>
<dbReference type="InterPro" id="IPR000891">
    <property type="entry name" value="PYR_CT"/>
</dbReference>
<dbReference type="NCBIfam" id="TIGR00973">
    <property type="entry name" value="leuA_bact"/>
    <property type="match status" value="1"/>
</dbReference>
<dbReference type="NCBIfam" id="NF002085">
    <property type="entry name" value="PRK00915.1-2"/>
    <property type="match status" value="1"/>
</dbReference>
<dbReference type="NCBIfam" id="NF002086">
    <property type="entry name" value="PRK00915.1-3"/>
    <property type="match status" value="1"/>
</dbReference>
<dbReference type="NCBIfam" id="NF002087">
    <property type="entry name" value="PRK00915.1-4"/>
    <property type="match status" value="1"/>
</dbReference>
<dbReference type="NCBIfam" id="NF002088">
    <property type="entry name" value="PRK00915.1-5"/>
    <property type="match status" value="1"/>
</dbReference>
<dbReference type="PANTHER" id="PTHR10277:SF9">
    <property type="entry name" value="2-ISOPROPYLMALATE SYNTHASE 1, CHLOROPLASTIC-RELATED"/>
    <property type="match status" value="1"/>
</dbReference>
<dbReference type="PANTHER" id="PTHR10277">
    <property type="entry name" value="HOMOCITRATE SYNTHASE-RELATED"/>
    <property type="match status" value="1"/>
</dbReference>
<dbReference type="Pfam" id="PF22617">
    <property type="entry name" value="HCS_D2"/>
    <property type="match status" value="1"/>
</dbReference>
<dbReference type="Pfam" id="PF00682">
    <property type="entry name" value="HMGL-like"/>
    <property type="match status" value="1"/>
</dbReference>
<dbReference type="Pfam" id="PF08502">
    <property type="entry name" value="LeuA_dimer"/>
    <property type="match status" value="1"/>
</dbReference>
<dbReference type="SMART" id="SM00917">
    <property type="entry name" value="LeuA_dimer"/>
    <property type="match status" value="1"/>
</dbReference>
<dbReference type="SUPFAM" id="SSF110921">
    <property type="entry name" value="2-isopropylmalate synthase LeuA, allosteric (dimerisation) domain"/>
    <property type="match status" value="1"/>
</dbReference>
<dbReference type="SUPFAM" id="SSF51569">
    <property type="entry name" value="Aldolase"/>
    <property type="match status" value="1"/>
</dbReference>
<dbReference type="PROSITE" id="PS00815">
    <property type="entry name" value="AIPM_HOMOCIT_SYNTH_1"/>
    <property type="match status" value="1"/>
</dbReference>
<dbReference type="PROSITE" id="PS00816">
    <property type="entry name" value="AIPM_HOMOCIT_SYNTH_2"/>
    <property type="match status" value="1"/>
</dbReference>
<dbReference type="PROSITE" id="PS50991">
    <property type="entry name" value="PYR_CT"/>
    <property type="match status" value="1"/>
</dbReference>
<protein>
    <recommendedName>
        <fullName evidence="1">2-isopropylmalate synthase</fullName>
        <ecNumber evidence="1">2.3.3.13</ecNumber>
    </recommendedName>
    <alternativeName>
        <fullName evidence="1">Alpha-IPM synthase</fullName>
    </alternativeName>
    <alternativeName>
        <fullName evidence="1">Alpha-isopropylmalate synthase</fullName>
    </alternativeName>
</protein>
<accession>B0TCR1</accession>
<evidence type="ECO:0000255" key="1">
    <source>
        <dbReference type="HAMAP-Rule" id="MF_01025"/>
    </source>
</evidence>
<feature type="chain" id="PRO_1000149210" description="2-isopropylmalate synthase">
    <location>
        <begin position="1"/>
        <end position="512"/>
    </location>
</feature>
<feature type="domain" description="Pyruvate carboxyltransferase" evidence="1">
    <location>
        <begin position="5"/>
        <end position="267"/>
    </location>
</feature>
<feature type="region of interest" description="Regulatory domain" evidence="1">
    <location>
        <begin position="391"/>
        <end position="512"/>
    </location>
</feature>
<feature type="binding site" evidence="1">
    <location>
        <position position="14"/>
    </location>
    <ligand>
        <name>Mn(2+)</name>
        <dbReference type="ChEBI" id="CHEBI:29035"/>
    </ligand>
</feature>
<feature type="binding site" evidence="1">
    <location>
        <position position="202"/>
    </location>
    <ligand>
        <name>Mn(2+)</name>
        <dbReference type="ChEBI" id="CHEBI:29035"/>
    </ligand>
</feature>
<feature type="binding site" evidence="1">
    <location>
        <position position="204"/>
    </location>
    <ligand>
        <name>Mn(2+)</name>
        <dbReference type="ChEBI" id="CHEBI:29035"/>
    </ligand>
</feature>
<feature type="binding site" evidence="1">
    <location>
        <position position="238"/>
    </location>
    <ligand>
        <name>Mn(2+)</name>
        <dbReference type="ChEBI" id="CHEBI:29035"/>
    </ligand>
</feature>
<proteinExistence type="inferred from homology"/>
<reference key="1">
    <citation type="journal article" date="2008" name="J. Bacteriol.">
        <title>The genome of Heliobacterium modesticaldum, a phototrophic representative of the Firmicutes containing the simplest photosynthetic apparatus.</title>
        <authorList>
            <person name="Sattley W.M."/>
            <person name="Madigan M.T."/>
            <person name="Swingley W.D."/>
            <person name="Cheung P.C."/>
            <person name="Clocksin K.M."/>
            <person name="Conrad A.L."/>
            <person name="Dejesa L.C."/>
            <person name="Honchak B.M."/>
            <person name="Jung D.O."/>
            <person name="Karbach L.E."/>
            <person name="Kurdoglu A."/>
            <person name="Lahiri S."/>
            <person name="Mastrian S.D."/>
            <person name="Page L.E."/>
            <person name="Taylor H.L."/>
            <person name="Wang Z.T."/>
            <person name="Raymond J."/>
            <person name="Chen M."/>
            <person name="Blankenship R.E."/>
            <person name="Touchman J.W."/>
        </authorList>
    </citation>
    <scope>NUCLEOTIDE SEQUENCE [LARGE SCALE GENOMIC DNA]</scope>
    <source>
        <strain>ATCC 51547 / Ice1</strain>
    </source>
</reference>